<reference key="1">
    <citation type="journal article" date="2008" name="Genome Biol.">
        <title>A genomic analysis of the archaeal system Ignicoccus hospitalis-Nanoarchaeum equitans.</title>
        <authorList>
            <person name="Podar M."/>
            <person name="Anderson I."/>
            <person name="Makarova K.S."/>
            <person name="Elkins J.G."/>
            <person name="Ivanova N."/>
            <person name="Wall M.A."/>
            <person name="Lykidis A."/>
            <person name="Mavromatis K."/>
            <person name="Sun H."/>
            <person name="Hudson M.E."/>
            <person name="Chen W."/>
            <person name="Deciu C."/>
            <person name="Hutchison D."/>
            <person name="Eads J.R."/>
            <person name="Anderson A."/>
            <person name="Fernandes F."/>
            <person name="Szeto E."/>
            <person name="Lapidus A."/>
            <person name="Kyrpides N.C."/>
            <person name="Saier M.H. Jr."/>
            <person name="Richardson P.M."/>
            <person name="Rachel R."/>
            <person name="Huber H."/>
            <person name="Eisen J.A."/>
            <person name="Koonin E.V."/>
            <person name="Keller M."/>
            <person name="Stetter K.O."/>
        </authorList>
    </citation>
    <scope>NUCLEOTIDE SEQUENCE [LARGE SCALE GENOMIC DNA]</scope>
    <source>
        <strain>KIN4/I / DSM 18386 / JCM 14125</strain>
    </source>
</reference>
<gene>
    <name type="primary">leuA</name>
    <name type="ordered locus">Igni_0983</name>
</gene>
<proteinExistence type="inferred from homology"/>
<feature type="chain" id="PRO_1000149211" description="Probable 2-isopropylmalate synthase">
    <location>
        <begin position="1"/>
        <end position="399"/>
    </location>
</feature>
<feature type="domain" description="Pyruvate carboxyltransferase" evidence="4">
    <location>
        <begin position="20"/>
        <end position="272"/>
    </location>
</feature>
<feature type="binding site" evidence="3">
    <location>
        <position position="29"/>
    </location>
    <ligand>
        <name>a divalent metal cation</name>
        <dbReference type="ChEBI" id="CHEBI:60240"/>
    </ligand>
</feature>
<feature type="binding site" evidence="3">
    <location>
        <position position="210"/>
    </location>
    <ligand>
        <name>a divalent metal cation</name>
        <dbReference type="ChEBI" id="CHEBI:60240"/>
    </ligand>
</feature>
<feature type="binding site" evidence="3">
    <location>
        <position position="212"/>
    </location>
    <ligand>
        <name>a divalent metal cation</name>
        <dbReference type="ChEBI" id="CHEBI:60240"/>
    </ligand>
</feature>
<feature type="binding site" evidence="3">
    <location>
        <position position="246"/>
    </location>
    <ligand>
        <name>a divalent metal cation</name>
        <dbReference type="ChEBI" id="CHEBI:60240"/>
    </ligand>
</feature>
<sequence>MLIVEGVRIAEELENLPKEVRIFDTTLRDGEQTPGISFTKEQKLMIARQLAKLGVASIEAGFPAVSQGEFEAVKAIAREGLGPEIVALARANKRDIDKALDADVDAIHVFIAASDIHLKYKLRMTREEALRRAVEAVEYAKSHGVTVEFSPEDGTRADLNYLYTMVEAVVDAGADRVDIPDTVGVMTPTRMKYLIKFILPAAKGRIVSVHCHNDFGLAVANSIAGIEAGARQAHVTVNGIGERAGNAALEEVVAALEFLLNVRTGVNTKLLYETSLLVSKITGIPIPPNKPIVGENVFSHESGIHVHGVINNPFTYEPIQPEMVGQRRRIVLGKHSGRHGVEYALKTLGYPTDPDVVLRVLDEVKRLGDMGIRVTEDKLREIVEKVLEERERAKEAATS</sequence>
<dbReference type="EC" id="2.3.3.13"/>
<dbReference type="EMBL" id="CP000816">
    <property type="protein sequence ID" value="ABU82163.1"/>
    <property type="molecule type" value="Genomic_DNA"/>
</dbReference>
<dbReference type="RefSeq" id="WP_012123127.1">
    <property type="nucleotide sequence ID" value="NC_009776.1"/>
</dbReference>
<dbReference type="SMR" id="A8AB61"/>
<dbReference type="STRING" id="453591.Igni_0983"/>
<dbReference type="GeneID" id="5563127"/>
<dbReference type="KEGG" id="iho:Igni_0983"/>
<dbReference type="eggNOG" id="arCOG02092">
    <property type="taxonomic scope" value="Archaea"/>
</dbReference>
<dbReference type="HOGENOM" id="CLU_022158_4_2_2"/>
<dbReference type="OrthoDB" id="6555at2157"/>
<dbReference type="PhylomeDB" id="A8AB61"/>
<dbReference type="UniPathway" id="UPA00048">
    <property type="reaction ID" value="UER00070"/>
</dbReference>
<dbReference type="Proteomes" id="UP000000262">
    <property type="component" value="Chromosome"/>
</dbReference>
<dbReference type="GO" id="GO:0003852">
    <property type="term" value="F:2-isopropylmalate synthase activity"/>
    <property type="evidence" value="ECO:0007669"/>
    <property type="project" value="UniProtKB-EC"/>
</dbReference>
<dbReference type="GO" id="GO:0046872">
    <property type="term" value="F:metal ion binding"/>
    <property type="evidence" value="ECO:0007669"/>
    <property type="project" value="UniProtKB-KW"/>
</dbReference>
<dbReference type="GO" id="GO:0009098">
    <property type="term" value="P:L-leucine biosynthetic process"/>
    <property type="evidence" value="ECO:0007669"/>
    <property type="project" value="UniProtKB-UniPathway"/>
</dbReference>
<dbReference type="CDD" id="cd07940">
    <property type="entry name" value="DRE_TIM_IPMS"/>
    <property type="match status" value="1"/>
</dbReference>
<dbReference type="FunFam" id="1.10.238.260:FF:000001">
    <property type="entry name" value="2-isopropylmalate synthase"/>
    <property type="match status" value="1"/>
</dbReference>
<dbReference type="FunFam" id="3.20.20.70:FF:000010">
    <property type="entry name" value="2-isopropylmalate synthase"/>
    <property type="match status" value="1"/>
</dbReference>
<dbReference type="Gene3D" id="1.10.238.260">
    <property type="match status" value="1"/>
</dbReference>
<dbReference type="Gene3D" id="3.20.20.70">
    <property type="entry name" value="Aldolase class I"/>
    <property type="match status" value="1"/>
</dbReference>
<dbReference type="InterPro" id="IPR050073">
    <property type="entry name" value="2-IPM_HCS-like"/>
</dbReference>
<dbReference type="InterPro" id="IPR002034">
    <property type="entry name" value="AIPM/Hcit_synth_CS"/>
</dbReference>
<dbReference type="InterPro" id="IPR013785">
    <property type="entry name" value="Aldolase_TIM"/>
</dbReference>
<dbReference type="InterPro" id="IPR054948">
    <property type="entry name" value="IPMS"/>
</dbReference>
<dbReference type="InterPro" id="IPR011830">
    <property type="entry name" value="LEU1_arch"/>
</dbReference>
<dbReference type="InterPro" id="IPR054691">
    <property type="entry name" value="LeuA/HCS_post-cat"/>
</dbReference>
<dbReference type="InterPro" id="IPR000891">
    <property type="entry name" value="PYR_CT"/>
</dbReference>
<dbReference type="NCBIfam" id="NF041069">
    <property type="entry name" value="IPMS_Sufob"/>
    <property type="match status" value="1"/>
</dbReference>
<dbReference type="NCBIfam" id="TIGR02090">
    <property type="entry name" value="LEU1_arch"/>
    <property type="match status" value="1"/>
</dbReference>
<dbReference type="NCBIfam" id="NF002085">
    <property type="entry name" value="PRK00915.1-2"/>
    <property type="match status" value="1"/>
</dbReference>
<dbReference type="PANTHER" id="PTHR10277:SF9">
    <property type="entry name" value="2-ISOPROPYLMALATE SYNTHASE 1, CHLOROPLASTIC-RELATED"/>
    <property type="match status" value="1"/>
</dbReference>
<dbReference type="PANTHER" id="PTHR10277">
    <property type="entry name" value="HOMOCITRATE SYNTHASE-RELATED"/>
    <property type="match status" value="1"/>
</dbReference>
<dbReference type="Pfam" id="PF22617">
    <property type="entry name" value="HCS_D2"/>
    <property type="match status" value="1"/>
</dbReference>
<dbReference type="Pfam" id="PF00682">
    <property type="entry name" value="HMGL-like"/>
    <property type="match status" value="1"/>
</dbReference>
<dbReference type="SUPFAM" id="SSF51569">
    <property type="entry name" value="Aldolase"/>
    <property type="match status" value="1"/>
</dbReference>
<dbReference type="PROSITE" id="PS00815">
    <property type="entry name" value="AIPM_HOMOCIT_SYNTH_1"/>
    <property type="match status" value="1"/>
</dbReference>
<dbReference type="PROSITE" id="PS00816">
    <property type="entry name" value="AIPM_HOMOCIT_SYNTH_2"/>
    <property type="match status" value="1"/>
</dbReference>
<dbReference type="PROSITE" id="PS50991">
    <property type="entry name" value="PYR_CT"/>
    <property type="match status" value="1"/>
</dbReference>
<protein>
    <recommendedName>
        <fullName>Probable 2-isopropylmalate synthase</fullName>
        <ecNumber>2.3.3.13</ecNumber>
    </recommendedName>
    <alternativeName>
        <fullName>Alpha-IPM synthase</fullName>
    </alternativeName>
    <alternativeName>
        <fullName>Alpha-isopropylmalate synthase</fullName>
    </alternativeName>
</protein>
<evidence type="ECO:0000250" key="1">
    <source>
        <dbReference type="UniProtKB" id="P9WQB3"/>
    </source>
</evidence>
<evidence type="ECO:0000250" key="2">
    <source>
        <dbReference type="UniProtKB" id="Q4JA78"/>
    </source>
</evidence>
<evidence type="ECO:0000250" key="3">
    <source>
        <dbReference type="UniProtKB" id="Q9JZG1"/>
    </source>
</evidence>
<evidence type="ECO:0000255" key="4">
    <source>
        <dbReference type="PROSITE-ProRule" id="PRU01151"/>
    </source>
</evidence>
<evidence type="ECO:0000305" key="5"/>
<accession>A8AB61</accession>
<keyword id="KW-0028">Amino-acid biosynthesis</keyword>
<keyword id="KW-0100">Branched-chain amino acid biosynthesis</keyword>
<keyword id="KW-0432">Leucine biosynthesis</keyword>
<keyword id="KW-0479">Metal-binding</keyword>
<keyword id="KW-1185">Reference proteome</keyword>
<keyword id="KW-0808">Transferase</keyword>
<comment type="function">
    <text evidence="2">Catalyzes the condensation of the acetyl group of acetyl-CoA with 3-methyl-2-oxobutanoate (2-oxoisovalerate) to form 3-carboxy-3-hydroxy-4-methylpentanoate (2-isopropylmalate).</text>
</comment>
<comment type="catalytic activity">
    <reaction evidence="2">
        <text>3-methyl-2-oxobutanoate + acetyl-CoA + H2O = (2S)-2-isopropylmalate + CoA + H(+)</text>
        <dbReference type="Rhea" id="RHEA:21524"/>
        <dbReference type="ChEBI" id="CHEBI:1178"/>
        <dbReference type="ChEBI" id="CHEBI:11851"/>
        <dbReference type="ChEBI" id="CHEBI:15377"/>
        <dbReference type="ChEBI" id="CHEBI:15378"/>
        <dbReference type="ChEBI" id="CHEBI:57287"/>
        <dbReference type="ChEBI" id="CHEBI:57288"/>
        <dbReference type="EC" id="2.3.3.13"/>
    </reaction>
</comment>
<comment type="cofactor">
    <cofactor evidence="3">
        <name>a divalent metal cation</name>
        <dbReference type="ChEBI" id="CHEBI:60240"/>
    </cofactor>
</comment>
<comment type="pathway">
    <text>Amino-acid biosynthesis; L-leucine biosynthesis; L-leucine from 3-methyl-2-oxobutanoate: step 1/4.</text>
</comment>
<comment type="subunit">
    <text evidence="1">Homodimer.</text>
</comment>
<comment type="similarity">
    <text evidence="5">Belongs to the alpha-IPM synthase/homocitrate synthase family.</text>
</comment>
<organism>
    <name type="scientific">Ignicoccus hospitalis (strain KIN4/I / DSM 18386 / JCM 14125)</name>
    <dbReference type="NCBI Taxonomy" id="453591"/>
    <lineage>
        <taxon>Archaea</taxon>
        <taxon>Thermoproteota</taxon>
        <taxon>Thermoprotei</taxon>
        <taxon>Desulfurococcales</taxon>
        <taxon>Desulfurococcaceae</taxon>
        <taxon>Ignicoccus</taxon>
    </lineage>
</organism>
<name>LEU1_IGNH4</name>